<keyword id="KW-0289">Folate biosynthesis</keyword>
<keyword id="KW-0413">Isomerase</keyword>
<keyword id="KW-0456">Lyase</keyword>
<gene>
    <name type="primary">folB</name>
    <name type="ordered locus">SE_2268</name>
</gene>
<dbReference type="EC" id="4.1.2.25" evidence="2"/>
<dbReference type="EC" id="5.1.99.8" evidence="2"/>
<dbReference type="EMBL" id="AE015929">
    <property type="protein sequence ID" value="AAO05910.1"/>
    <property type="molecule type" value="Genomic_DNA"/>
</dbReference>
<dbReference type="RefSeq" id="NP_765823.1">
    <property type="nucleotide sequence ID" value="NC_004461.1"/>
</dbReference>
<dbReference type="RefSeq" id="WP_001832204.1">
    <property type="nucleotide sequence ID" value="NZ_WBME01000023.1"/>
</dbReference>
<dbReference type="SMR" id="Q8CMT8"/>
<dbReference type="GeneID" id="50019574"/>
<dbReference type="KEGG" id="sep:SE_2268"/>
<dbReference type="PATRIC" id="fig|176280.10.peg.2211"/>
<dbReference type="eggNOG" id="COG1539">
    <property type="taxonomic scope" value="Bacteria"/>
</dbReference>
<dbReference type="HOGENOM" id="CLU_112632_1_3_9"/>
<dbReference type="OrthoDB" id="9803748at2"/>
<dbReference type="UniPathway" id="UPA00077">
    <property type="reaction ID" value="UER00154"/>
</dbReference>
<dbReference type="Proteomes" id="UP000001411">
    <property type="component" value="Chromosome"/>
</dbReference>
<dbReference type="GO" id="GO:0005737">
    <property type="term" value="C:cytoplasm"/>
    <property type="evidence" value="ECO:0007669"/>
    <property type="project" value="TreeGrafter"/>
</dbReference>
<dbReference type="GO" id="GO:0004150">
    <property type="term" value="F:dihydroneopterin aldolase activity"/>
    <property type="evidence" value="ECO:0007669"/>
    <property type="project" value="UniProtKB-EC"/>
</dbReference>
<dbReference type="GO" id="GO:0016853">
    <property type="term" value="F:isomerase activity"/>
    <property type="evidence" value="ECO:0007669"/>
    <property type="project" value="UniProtKB-KW"/>
</dbReference>
<dbReference type="GO" id="GO:0046656">
    <property type="term" value="P:folic acid biosynthetic process"/>
    <property type="evidence" value="ECO:0007669"/>
    <property type="project" value="UniProtKB-KW"/>
</dbReference>
<dbReference type="GO" id="GO:0046654">
    <property type="term" value="P:tetrahydrofolate biosynthetic process"/>
    <property type="evidence" value="ECO:0007669"/>
    <property type="project" value="UniProtKB-UniPathway"/>
</dbReference>
<dbReference type="CDD" id="cd00534">
    <property type="entry name" value="DHNA_DHNTPE"/>
    <property type="match status" value="1"/>
</dbReference>
<dbReference type="FunFam" id="3.30.1130.10:FF:000003">
    <property type="entry name" value="7,8-dihydroneopterin aldolase"/>
    <property type="match status" value="1"/>
</dbReference>
<dbReference type="Gene3D" id="3.30.1130.10">
    <property type="match status" value="1"/>
</dbReference>
<dbReference type="InterPro" id="IPR006156">
    <property type="entry name" value="Dihydroneopterin_aldolase"/>
</dbReference>
<dbReference type="InterPro" id="IPR006157">
    <property type="entry name" value="FolB_dom"/>
</dbReference>
<dbReference type="InterPro" id="IPR043133">
    <property type="entry name" value="GTP-CH-I_C/QueF"/>
</dbReference>
<dbReference type="NCBIfam" id="TIGR00525">
    <property type="entry name" value="folB"/>
    <property type="match status" value="1"/>
</dbReference>
<dbReference type="NCBIfam" id="TIGR00526">
    <property type="entry name" value="folB_dom"/>
    <property type="match status" value="1"/>
</dbReference>
<dbReference type="PANTHER" id="PTHR42844">
    <property type="entry name" value="DIHYDRONEOPTERIN ALDOLASE 1-RELATED"/>
    <property type="match status" value="1"/>
</dbReference>
<dbReference type="PANTHER" id="PTHR42844:SF1">
    <property type="entry name" value="DIHYDRONEOPTERIN ALDOLASE 1-RELATED"/>
    <property type="match status" value="1"/>
</dbReference>
<dbReference type="Pfam" id="PF02152">
    <property type="entry name" value="FolB"/>
    <property type="match status" value="1"/>
</dbReference>
<dbReference type="SMART" id="SM00905">
    <property type="entry name" value="FolB"/>
    <property type="match status" value="1"/>
</dbReference>
<dbReference type="SUPFAM" id="SSF55620">
    <property type="entry name" value="Tetrahydrobiopterin biosynthesis enzymes-like"/>
    <property type="match status" value="1"/>
</dbReference>
<organism>
    <name type="scientific">Staphylococcus epidermidis (strain ATCC 12228 / FDA PCI 1200)</name>
    <dbReference type="NCBI Taxonomy" id="176280"/>
    <lineage>
        <taxon>Bacteria</taxon>
        <taxon>Bacillati</taxon>
        <taxon>Bacillota</taxon>
        <taxon>Bacilli</taxon>
        <taxon>Bacillales</taxon>
        <taxon>Staphylococcaceae</taxon>
        <taxon>Staphylococcus</taxon>
    </lineage>
</organism>
<reference key="1">
    <citation type="journal article" date="2003" name="Mol. Microbiol.">
        <title>Genome-based analysis of virulence genes in a non-biofilm-forming Staphylococcus epidermidis strain (ATCC 12228).</title>
        <authorList>
            <person name="Zhang Y.-Q."/>
            <person name="Ren S.-X."/>
            <person name="Li H.-L."/>
            <person name="Wang Y.-X."/>
            <person name="Fu G."/>
            <person name="Yang J."/>
            <person name="Qin Z.-Q."/>
            <person name="Miao Y.-G."/>
            <person name="Wang W.-Y."/>
            <person name="Chen R.-S."/>
            <person name="Shen Y."/>
            <person name="Chen Z."/>
            <person name="Yuan Z.-H."/>
            <person name="Zhao G.-P."/>
            <person name="Qu D."/>
            <person name="Danchin A."/>
            <person name="Wen Y.-M."/>
        </authorList>
    </citation>
    <scope>NUCLEOTIDE SEQUENCE [LARGE SCALE GENOMIC DNA]</scope>
    <source>
        <strain>ATCC 12228 / FDA PCI 1200</strain>
    </source>
</reference>
<sequence length="121" mass="13694">MNDIIFLNGMRFYGYHGVLAAENDIGQIFVVDITLKVDLSYAGQSDDVKDTVNYGEVYKDVKSIVEGPRSCLIEHLAERIAKHINSHYNRVMETKVRITKENPPIPGHYDGVGIEIVREND</sequence>
<name>FOLB_STAES</name>
<protein>
    <recommendedName>
        <fullName>Dihydroneopterin aldolase</fullName>
        <shortName>DHNA</shortName>
        <ecNumber evidence="2">4.1.2.25</ecNumber>
    </recommendedName>
    <alternativeName>
        <fullName>7,8-dihydroneopterin 2'-epimerase</fullName>
    </alternativeName>
    <alternativeName>
        <fullName>7,8-dihydroneopterin aldolase</fullName>
    </alternativeName>
    <alternativeName>
        <fullName>7,8-dihydroneopterin epimerase</fullName>
        <ecNumber evidence="2">5.1.99.8</ecNumber>
    </alternativeName>
    <alternativeName>
        <fullName>Dihydroneopterin epimerase</fullName>
    </alternativeName>
</protein>
<feature type="chain" id="PRO_0000168284" description="Dihydroneopterin aldolase">
    <location>
        <begin position="1"/>
        <end position="121"/>
    </location>
</feature>
<feature type="active site" description="Proton donor/acceptor" evidence="3">
    <location>
        <position position="100"/>
    </location>
</feature>
<feature type="binding site" evidence="3">
    <location>
        <position position="22"/>
    </location>
    <ligand>
        <name>substrate</name>
    </ligand>
</feature>
<feature type="binding site" evidence="3">
    <location>
        <position position="54"/>
    </location>
    <ligand>
        <name>substrate</name>
    </ligand>
</feature>
<feature type="binding site" evidence="3">
    <location>
        <begin position="73"/>
        <end position="74"/>
    </location>
    <ligand>
        <name>substrate</name>
    </ligand>
</feature>
<accession>Q8CMT8</accession>
<comment type="function">
    <text evidence="3">Catalyzes the conversion of 7,8-dihydroneopterin to 6-hydroxymethyl-7,8-dihydropterin. Can also catalyze the epimerization of carbon 2' of dihydroneopterin to dihydromonapterin.</text>
</comment>
<comment type="catalytic activity">
    <reaction evidence="3">
        <text>7,8-dihydroneopterin = 6-hydroxymethyl-7,8-dihydropterin + glycolaldehyde</text>
        <dbReference type="Rhea" id="RHEA:10540"/>
        <dbReference type="ChEBI" id="CHEBI:17001"/>
        <dbReference type="ChEBI" id="CHEBI:17071"/>
        <dbReference type="ChEBI" id="CHEBI:44841"/>
        <dbReference type="EC" id="4.1.2.25"/>
    </reaction>
</comment>
<comment type="catalytic activity">
    <reaction evidence="2">
        <text>7,8-dihydroneopterin = 7,8-dihydromonapterin</text>
        <dbReference type="Rhea" id="RHEA:45328"/>
        <dbReference type="ChEBI" id="CHEBI:17001"/>
        <dbReference type="ChEBI" id="CHEBI:71175"/>
        <dbReference type="EC" id="5.1.99.8"/>
    </reaction>
</comment>
<comment type="pathway">
    <text>Cofactor biosynthesis; tetrahydrofolate biosynthesis; 2-amino-4-hydroxy-6-hydroxymethyl-7,8-dihydropteridine diphosphate from 7,8-dihydroneopterin triphosphate: step 3/4.</text>
</comment>
<comment type="subunit">
    <text evidence="1">Homooctamer. Four molecules assemble into a ring, and two rings come together to give a cylinder with a hole of at least 13 a diameter (By similarity).</text>
</comment>
<comment type="similarity">
    <text evidence="4">Belongs to the DHNA family.</text>
</comment>
<proteinExistence type="inferred from homology"/>
<evidence type="ECO:0000250" key="1"/>
<evidence type="ECO:0000250" key="2">
    <source>
        <dbReference type="UniProtKB" id="P0AC16"/>
    </source>
</evidence>
<evidence type="ECO:0000250" key="3">
    <source>
        <dbReference type="UniProtKB" id="P56740"/>
    </source>
</evidence>
<evidence type="ECO:0000305" key="4"/>